<dbReference type="EC" id="1.18.6.1"/>
<dbReference type="EMBL" id="BX950229">
    <property type="protein sequence ID" value="CAF30409.1"/>
    <property type="molecule type" value="Genomic_DNA"/>
</dbReference>
<dbReference type="RefSeq" id="WP_011170797.1">
    <property type="nucleotide sequence ID" value="NC_005791.1"/>
</dbReference>
<dbReference type="PDB" id="8Q5X">
    <property type="method" value="X-ray"/>
    <property type="resolution" value="1.70 A"/>
    <property type="chains" value="A/B/C/D=1-275"/>
</dbReference>
<dbReference type="PDBsum" id="8Q5X"/>
<dbReference type="SMR" id="P0CW57"/>
<dbReference type="STRING" id="267377.MMP0853"/>
<dbReference type="EnsemblBacteria" id="CAF30409">
    <property type="protein sequence ID" value="CAF30409"/>
    <property type="gene ID" value="MMP0853"/>
</dbReference>
<dbReference type="GeneID" id="10982408"/>
<dbReference type="GeneID" id="36101236"/>
<dbReference type="KEGG" id="mmp:MMP0853"/>
<dbReference type="PATRIC" id="fig|267377.15.peg.878"/>
<dbReference type="eggNOG" id="arCOG00590">
    <property type="taxonomic scope" value="Archaea"/>
</dbReference>
<dbReference type="HOGENOM" id="CLU_059373_0_0_2"/>
<dbReference type="OrthoDB" id="145464at2157"/>
<dbReference type="Proteomes" id="UP000000590">
    <property type="component" value="Chromosome"/>
</dbReference>
<dbReference type="GO" id="GO:0051539">
    <property type="term" value="F:4 iron, 4 sulfur cluster binding"/>
    <property type="evidence" value="ECO:0007669"/>
    <property type="project" value="UniProtKB-KW"/>
</dbReference>
<dbReference type="GO" id="GO:0005524">
    <property type="term" value="F:ATP binding"/>
    <property type="evidence" value="ECO:0007669"/>
    <property type="project" value="UniProtKB-UniRule"/>
</dbReference>
<dbReference type="GO" id="GO:0046872">
    <property type="term" value="F:metal ion binding"/>
    <property type="evidence" value="ECO:0007669"/>
    <property type="project" value="UniProtKB-KW"/>
</dbReference>
<dbReference type="GO" id="GO:0016163">
    <property type="term" value="F:nitrogenase activity"/>
    <property type="evidence" value="ECO:0007669"/>
    <property type="project" value="UniProtKB-UniRule"/>
</dbReference>
<dbReference type="GO" id="GO:0009399">
    <property type="term" value="P:nitrogen fixation"/>
    <property type="evidence" value="ECO:0007669"/>
    <property type="project" value="UniProtKB-UniRule"/>
</dbReference>
<dbReference type="CDD" id="cd02040">
    <property type="entry name" value="NifH"/>
    <property type="match status" value="1"/>
</dbReference>
<dbReference type="Gene3D" id="3.40.50.300">
    <property type="entry name" value="P-loop containing nucleotide triphosphate hydrolases"/>
    <property type="match status" value="1"/>
</dbReference>
<dbReference type="HAMAP" id="MF_00533">
    <property type="entry name" value="NifH"/>
    <property type="match status" value="1"/>
</dbReference>
<dbReference type="InterPro" id="IPR030655">
    <property type="entry name" value="NifH/chlL_CS"/>
</dbReference>
<dbReference type="InterPro" id="IPR000392">
    <property type="entry name" value="NifH/frxC"/>
</dbReference>
<dbReference type="InterPro" id="IPR005977">
    <property type="entry name" value="Nitrogenase_Fe_NifH"/>
</dbReference>
<dbReference type="InterPro" id="IPR027417">
    <property type="entry name" value="P-loop_NTPase"/>
</dbReference>
<dbReference type="NCBIfam" id="TIGR01287">
    <property type="entry name" value="nifH"/>
    <property type="match status" value="1"/>
</dbReference>
<dbReference type="PANTHER" id="PTHR42864">
    <property type="entry name" value="LIGHT-INDEPENDENT PROTOCHLOROPHYLLIDE REDUCTASE IRON-SULFUR ATP-BINDING PROTEIN"/>
    <property type="match status" value="1"/>
</dbReference>
<dbReference type="PANTHER" id="PTHR42864:SF2">
    <property type="entry name" value="LIGHT-INDEPENDENT PROTOCHLOROPHYLLIDE REDUCTASE IRON-SULFUR ATP-BINDING PROTEIN"/>
    <property type="match status" value="1"/>
</dbReference>
<dbReference type="Pfam" id="PF00142">
    <property type="entry name" value="Fer4_NifH"/>
    <property type="match status" value="1"/>
</dbReference>
<dbReference type="PIRSF" id="PIRSF000363">
    <property type="entry name" value="Nitrogenase_iron"/>
    <property type="match status" value="1"/>
</dbReference>
<dbReference type="PRINTS" id="PR00091">
    <property type="entry name" value="NITROGNASEII"/>
</dbReference>
<dbReference type="SUPFAM" id="SSF52540">
    <property type="entry name" value="P-loop containing nucleoside triphosphate hydrolases"/>
    <property type="match status" value="1"/>
</dbReference>
<dbReference type="PROSITE" id="PS00746">
    <property type="entry name" value="NIFH_FRXC_1"/>
    <property type="match status" value="1"/>
</dbReference>
<dbReference type="PROSITE" id="PS00692">
    <property type="entry name" value="NIFH_FRXC_2"/>
    <property type="match status" value="1"/>
</dbReference>
<dbReference type="PROSITE" id="PS51026">
    <property type="entry name" value="NIFH_FRXC_3"/>
    <property type="match status" value="1"/>
</dbReference>
<organism>
    <name type="scientific">Methanococcus maripaludis (strain DSM 14266 / JCM 13030 / NBRC 101832 / S2 / LL)</name>
    <dbReference type="NCBI Taxonomy" id="267377"/>
    <lineage>
        <taxon>Archaea</taxon>
        <taxon>Methanobacteriati</taxon>
        <taxon>Methanobacteriota</taxon>
        <taxon>Methanomada group</taxon>
        <taxon>Methanococci</taxon>
        <taxon>Methanococcales</taxon>
        <taxon>Methanococcaceae</taxon>
        <taxon>Methanococcus</taxon>
    </lineage>
</organism>
<evidence type="ECO:0000250" key="1"/>
<evidence type="ECO:0000255" key="2"/>
<evidence type="ECO:0000305" key="3"/>
<evidence type="ECO:0007829" key="4">
    <source>
        <dbReference type="PDB" id="8Q5X"/>
    </source>
</evidence>
<sequence length="275" mass="30146">MVRKIAIYGKGGIGKSTTTQNTVAAMAHFHDKKVFIHGCDPKADSTRLILHGKQQVTMMDTLREKGEDECTPDKVIEVGFGGVKCVESGGPEPGVGCAGRGVITAITLMEQHGVYEDDLDFVFFDVLGDVVCGGFAMPVRDGKADEIYVVASGEMMALYAANNICKGMVKYAEQSGVRLGGIICNSRNVDGELDLLQEFCDKIGTQLIHFVPRDNIVQKAEFQKKAVVDYDDTCNQALEYKELARKIIENENLVIPTPMTMDELEELTSKYGFLD</sequence>
<reference key="1">
    <citation type="journal article" date="2004" name="J. Bacteriol.">
        <title>Complete genome sequence of the genetically tractable hydrogenotrophic methanogen Methanococcus maripaludis.</title>
        <authorList>
            <person name="Hendrickson E.L."/>
            <person name="Kaul R."/>
            <person name="Zhou Y."/>
            <person name="Bovee D."/>
            <person name="Chapman P."/>
            <person name="Chung J."/>
            <person name="Conway de Macario E."/>
            <person name="Dodsworth J.A."/>
            <person name="Gillett W."/>
            <person name="Graham D.E."/>
            <person name="Hackett M."/>
            <person name="Haydock A.K."/>
            <person name="Kang A."/>
            <person name="Land M.L."/>
            <person name="Levy R."/>
            <person name="Lie T.J."/>
            <person name="Major T.A."/>
            <person name="Moore B.C."/>
            <person name="Porat I."/>
            <person name="Palmeiri A."/>
            <person name="Rouse G."/>
            <person name="Saenphimmachak C."/>
            <person name="Soell D."/>
            <person name="Van Dien S."/>
            <person name="Wang T."/>
            <person name="Whitman W.B."/>
            <person name="Xia Q."/>
            <person name="Zhang Y."/>
            <person name="Larimer F.W."/>
            <person name="Olson M.V."/>
            <person name="Leigh J.A."/>
        </authorList>
    </citation>
    <scope>NUCLEOTIDE SEQUENCE [LARGE SCALE GENOMIC DNA]</scope>
    <source>
        <strain>DSM 14266 / JCM 13030 / NBRC 101832 / S2 / LL</strain>
    </source>
</reference>
<accession>P0CW57</accession>
<accession>Q50218</accession>
<feature type="chain" id="PRO_0000408223" description="Nitrogenase iron protein">
    <location>
        <begin position="1"/>
        <end position="275"/>
    </location>
</feature>
<feature type="binding site" evidence="2">
    <location>
        <begin position="9"/>
        <end position="16"/>
    </location>
    <ligand>
        <name>ATP</name>
        <dbReference type="ChEBI" id="CHEBI:30616"/>
    </ligand>
</feature>
<feature type="binding site" evidence="1">
    <location>
        <position position="97"/>
    </location>
    <ligand>
        <name>[4Fe-4S] cluster</name>
        <dbReference type="ChEBI" id="CHEBI:49883"/>
        <note>ligand shared between dimeric partners</note>
    </ligand>
</feature>
<feature type="binding site" evidence="1">
    <location>
        <position position="132"/>
    </location>
    <ligand>
        <name>[4Fe-4S] cluster</name>
        <dbReference type="ChEBI" id="CHEBI:49883"/>
        <note>ligand shared between dimeric partners</note>
    </ligand>
</feature>
<feature type="modified residue" description="ADP-ribosylarginine; by dinitrogenase reductase ADP-ribosyltransferase" evidence="1">
    <location>
        <position position="100"/>
    </location>
</feature>
<feature type="strand" evidence="4">
    <location>
        <begin position="3"/>
        <end position="8"/>
    </location>
</feature>
<feature type="helix" evidence="4">
    <location>
        <begin position="15"/>
        <end position="28"/>
    </location>
</feature>
<feature type="strand" evidence="4">
    <location>
        <begin position="34"/>
        <end position="40"/>
    </location>
</feature>
<feature type="turn" evidence="4">
    <location>
        <begin position="45"/>
        <end position="52"/>
    </location>
</feature>
<feature type="helix" evidence="4">
    <location>
        <begin position="58"/>
        <end position="65"/>
    </location>
</feature>
<feature type="helix" evidence="4">
    <location>
        <begin position="67"/>
        <end position="69"/>
    </location>
</feature>
<feature type="helix" evidence="4">
    <location>
        <begin position="72"/>
        <end position="74"/>
    </location>
</feature>
<feature type="helix" evidence="4">
    <location>
        <begin position="80"/>
        <end position="82"/>
    </location>
</feature>
<feature type="strand" evidence="4">
    <location>
        <begin position="84"/>
        <end position="87"/>
    </location>
</feature>
<feature type="turn" evidence="4">
    <location>
        <begin position="93"/>
        <end position="95"/>
    </location>
</feature>
<feature type="helix" evidence="4">
    <location>
        <begin position="100"/>
        <end position="111"/>
    </location>
</feature>
<feature type="helix" evidence="4">
    <location>
        <begin position="114"/>
        <end position="116"/>
    </location>
</feature>
<feature type="strand" evidence="4">
    <location>
        <begin position="120"/>
        <end position="126"/>
    </location>
</feature>
<feature type="helix" evidence="4">
    <location>
        <begin position="133"/>
        <end position="136"/>
    </location>
</feature>
<feature type="helix" evidence="4">
    <location>
        <begin position="137"/>
        <end position="140"/>
    </location>
</feature>
<feature type="strand" evidence="4">
    <location>
        <begin position="145"/>
        <end position="151"/>
    </location>
</feature>
<feature type="helix" evidence="4">
    <location>
        <begin position="155"/>
        <end position="175"/>
    </location>
</feature>
<feature type="strand" evidence="4">
    <location>
        <begin position="178"/>
        <end position="185"/>
    </location>
</feature>
<feature type="helix" evidence="4">
    <location>
        <begin position="192"/>
        <end position="203"/>
    </location>
</feature>
<feature type="strand" evidence="4">
    <location>
        <begin position="207"/>
        <end position="211"/>
    </location>
</feature>
<feature type="helix" evidence="4">
    <location>
        <begin position="216"/>
        <end position="222"/>
    </location>
</feature>
<feature type="helix" evidence="4">
    <location>
        <begin position="227"/>
        <end position="230"/>
    </location>
</feature>
<feature type="helix" evidence="4">
    <location>
        <begin position="235"/>
        <end position="249"/>
    </location>
</feature>
<feature type="helix" evidence="4">
    <location>
        <begin position="261"/>
        <end position="270"/>
    </location>
</feature>
<name>NIFH_METMP</name>
<protein>
    <recommendedName>
        <fullName>Nitrogenase iron protein</fullName>
        <ecNumber>1.18.6.1</ecNumber>
    </recommendedName>
    <alternativeName>
        <fullName>Nitrogenase Fe protein</fullName>
    </alternativeName>
    <alternativeName>
        <fullName>Nitrogenase component II</fullName>
    </alternativeName>
    <alternativeName>
        <fullName>Nitrogenase reductase</fullName>
    </alternativeName>
</protein>
<comment type="function">
    <text evidence="1">The key enzymatic reactions in nitrogen fixation are catalyzed by the nitrogenase complex, which has 2 components: the iron protein and the molybdenum-iron protein.</text>
</comment>
<comment type="catalytic activity">
    <reaction>
        <text>N2 + 8 reduced [2Fe-2S]-[ferredoxin] + 16 ATP + 16 H2O = H2 + 8 oxidized [2Fe-2S]-[ferredoxin] + 2 NH4(+) + 16 ADP + 16 phosphate + 6 H(+)</text>
        <dbReference type="Rhea" id="RHEA:21448"/>
        <dbReference type="Rhea" id="RHEA-COMP:10000"/>
        <dbReference type="Rhea" id="RHEA-COMP:10001"/>
        <dbReference type="ChEBI" id="CHEBI:15377"/>
        <dbReference type="ChEBI" id="CHEBI:15378"/>
        <dbReference type="ChEBI" id="CHEBI:17997"/>
        <dbReference type="ChEBI" id="CHEBI:18276"/>
        <dbReference type="ChEBI" id="CHEBI:28938"/>
        <dbReference type="ChEBI" id="CHEBI:30616"/>
        <dbReference type="ChEBI" id="CHEBI:33737"/>
        <dbReference type="ChEBI" id="CHEBI:33738"/>
        <dbReference type="ChEBI" id="CHEBI:43474"/>
        <dbReference type="ChEBI" id="CHEBI:456216"/>
        <dbReference type="EC" id="1.18.6.1"/>
    </reaction>
</comment>
<comment type="cofactor">
    <cofactor evidence="1">
        <name>[4Fe-4S] cluster</name>
        <dbReference type="ChEBI" id="CHEBI:49883"/>
    </cofactor>
    <text evidence="1">Binds 1 [4Fe-4S] cluster per dimer.</text>
</comment>
<comment type="subunit">
    <text evidence="1">Homodimer.</text>
</comment>
<comment type="PTM">
    <text evidence="1">The reversible ADP-ribosylation of Arg-100 inactivates the nitrogenase reductase and regulates nitrogenase activity.</text>
</comment>
<comment type="similarity">
    <text evidence="3">Belongs to the NifH/BchL/ChlL family.</text>
</comment>
<keyword id="KW-0002">3D-structure</keyword>
<keyword id="KW-0004">4Fe-4S</keyword>
<keyword id="KW-0013">ADP-ribosylation</keyword>
<keyword id="KW-0067">ATP-binding</keyword>
<keyword id="KW-0408">Iron</keyword>
<keyword id="KW-0411">Iron-sulfur</keyword>
<keyword id="KW-0479">Metal-binding</keyword>
<keyword id="KW-0535">Nitrogen fixation</keyword>
<keyword id="KW-0547">Nucleotide-binding</keyword>
<keyword id="KW-0560">Oxidoreductase</keyword>
<keyword id="KW-1185">Reference proteome</keyword>
<proteinExistence type="evidence at protein level"/>
<gene>
    <name type="primary">nifH</name>
    <name type="ordered locus">MMP0853</name>
</gene>